<name>CCA_SHEPW</name>
<reference key="1">
    <citation type="journal article" date="2008" name="PLoS ONE">
        <title>Environmental adaptation: genomic analysis of the piezotolerant and psychrotolerant deep-sea iron reducing bacterium Shewanella piezotolerans WP3.</title>
        <authorList>
            <person name="Wang F."/>
            <person name="Wang J."/>
            <person name="Jian H."/>
            <person name="Zhang B."/>
            <person name="Li S."/>
            <person name="Wang F."/>
            <person name="Zeng X."/>
            <person name="Gao L."/>
            <person name="Bartlett D.H."/>
            <person name="Yu J."/>
            <person name="Hu S."/>
            <person name="Xiao X."/>
        </authorList>
    </citation>
    <scope>NUCLEOTIDE SEQUENCE [LARGE SCALE GENOMIC DNA]</scope>
    <source>
        <strain>WP3 / JCM 13877</strain>
    </source>
</reference>
<protein>
    <recommendedName>
        <fullName evidence="1">Multifunctional CCA protein</fullName>
    </recommendedName>
    <domain>
        <recommendedName>
            <fullName evidence="1">CCA-adding enzyme</fullName>
            <ecNumber evidence="1">2.7.7.72</ecNumber>
        </recommendedName>
        <alternativeName>
            <fullName evidence="1">CCA tRNA nucleotidyltransferase</fullName>
        </alternativeName>
        <alternativeName>
            <fullName evidence="1">tRNA CCA-pyrophosphorylase</fullName>
        </alternativeName>
        <alternativeName>
            <fullName evidence="1">tRNA adenylyl-/cytidylyl-transferase</fullName>
        </alternativeName>
        <alternativeName>
            <fullName evidence="1">tRNA nucleotidyltransferase</fullName>
        </alternativeName>
        <alternativeName>
            <fullName evidence="1">tRNA-NT</fullName>
        </alternativeName>
    </domain>
    <domain>
        <recommendedName>
            <fullName evidence="1">2'-nucleotidase</fullName>
            <ecNumber evidence="1">3.1.3.-</ecNumber>
        </recommendedName>
    </domain>
    <domain>
        <recommendedName>
            <fullName evidence="1">2',3'-cyclic phosphodiesterase</fullName>
            <ecNumber evidence="1">3.1.4.-</ecNumber>
        </recommendedName>
    </domain>
    <domain>
        <recommendedName>
            <fullName evidence="1">Phosphatase</fullName>
            <ecNumber evidence="1">3.1.3.-</ecNumber>
        </recommendedName>
    </domain>
</protein>
<organism>
    <name type="scientific">Shewanella piezotolerans (strain WP3 / JCM 13877)</name>
    <dbReference type="NCBI Taxonomy" id="225849"/>
    <lineage>
        <taxon>Bacteria</taxon>
        <taxon>Pseudomonadati</taxon>
        <taxon>Pseudomonadota</taxon>
        <taxon>Gammaproteobacteria</taxon>
        <taxon>Alteromonadales</taxon>
        <taxon>Shewanellaceae</taxon>
        <taxon>Shewanella</taxon>
    </lineage>
</organism>
<dbReference type="EC" id="2.7.7.72" evidence="1"/>
<dbReference type="EC" id="3.1.3.-" evidence="1"/>
<dbReference type="EC" id="3.1.4.-" evidence="1"/>
<dbReference type="EMBL" id="CP000472">
    <property type="protein sequence ID" value="ACJ27921.1"/>
    <property type="molecule type" value="Genomic_DNA"/>
</dbReference>
<dbReference type="RefSeq" id="WP_020911299.1">
    <property type="nucleotide sequence ID" value="NC_011566.1"/>
</dbReference>
<dbReference type="SMR" id="B8CJF9"/>
<dbReference type="STRING" id="225849.swp_1124"/>
<dbReference type="KEGG" id="swp:swp_1124"/>
<dbReference type="eggNOG" id="COG0617">
    <property type="taxonomic scope" value="Bacteria"/>
</dbReference>
<dbReference type="HOGENOM" id="CLU_015961_1_1_6"/>
<dbReference type="OrthoDB" id="9805698at2"/>
<dbReference type="Proteomes" id="UP000000753">
    <property type="component" value="Chromosome"/>
</dbReference>
<dbReference type="GO" id="GO:0005524">
    <property type="term" value="F:ATP binding"/>
    <property type="evidence" value="ECO:0007669"/>
    <property type="project" value="UniProtKB-UniRule"/>
</dbReference>
<dbReference type="GO" id="GO:0004810">
    <property type="term" value="F:CCA tRNA nucleotidyltransferase activity"/>
    <property type="evidence" value="ECO:0007669"/>
    <property type="project" value="UniProtKB-UniRule"/>
</dbReference>
<dbReference type="GO" id="GO:0004112">
    <property type="term" value="F:cyclic-nucleotide phosphodiesterase activity"/>
    <property type="evidence" value="ECO:0007669"/>
    <property type="project" value="UniProtKB-UniRule"/>
</dbReference>
<dbReference type="GO" id="GO:0000287">
    <property type="term" value="F:magnesium ion binding"/>
    <property type="evidence" value="ECO:0007669"/>
    <property type="project" value="UniProtKB-UniRule"/>
</dbReference>
<dbReference type="GO" id="GO:0016791">
    <property type="term" value="F:phosphatase activity"/>
    <property type="evidence" value="ECO:0007669"/>
    <property type="project" value="UniProtKB-UniRule"/>
</dbReference>
<dbReference type="GO" id="GO:0000049">
    <property type="term" value="F:tRNA binding"/>
    <property type="evidence" value="ECO:0007669"/>
    <property type="project" value="UniProtKB-UniRule"/>
</dbReference>
<dbReference type="GO" id="GO:0042245">
    <property type="term" value="P:RNA repair"/>
    <property type="evidence" value="ECO:0007669"/>
    <property type="project" value="UniProtKB-KW"/>
</dbReference>
<dbReference type="GO" id="GO:0001680">
    <property type="term" value="P:tRNA 3'-terminal CCA addition"/>
    <property type="evidence" value="ECO:0007669"/>
    <property type="project" value="UniProtKB-UniRule"/>
</dbReference>
<dbReference type="CDD" id="cd00077">
    <property type="entry name" value="HDc"/>
    <property type="match status" value="1"/>
</dbReference>
<dbReference type="CDD" id="cd05398">
    <property type="entry name" value="NT_ClassII-CCAase"/>
    <property type="match status" value="1"/>
</dbReference>
<dbReference type="FunFam" id="1.10.3090.10:FF:000001">
    <property type="entry name" value="Multifunctional CCA protein"/>
    <property type="match status" value="1"/>
</dbReference>
<dbReference type="Gene3D" id="3.30.460.10">
    <property type="entry name" value="Beta Polymerase, domain 2"/>
    <property type="match status" value="1"/>
</dbReference>
<dbReference type="Gene3D" id="1.10.3090.10">
    <property type="entry name" value="cca-adding enzyme, domain 2"/>
    <property type="match status" value="1"/>
</dbReference>
<dbReference type="HAMAP" id="MF_01261">
    <property type="entry name" value="CCA_bact_type1"/>
    <property type="match status" value="1"/>
</dbReference>
<dbReference type="HAMAP" id="MF_01262">
    <property type="entry name" value="CCA_bact_type2"/>
    <property type="match status" value="1"/>
</dbReference>
<dbReference type="InterPro" id="IPR012006">
    <property type="entry name" value="CCA_bact"/>
</dbReference>
<dbReference type="InterPro" id="IPR003607">
    <property type="entry name" value="HD/PDEase_dom"/>
</dbReference>
<dbReference type="InterPro" id="IPR006674">
    <property type="entry name" value="HD_domain"/>
</dbReference>
<dbReference type="InterPro" id="IPR043519">
    <property type="entry name" value="NT_sf"/>
</dbReference>
<dbReference type="InterPro" id="IPR002646">
    <property type="entry name" value="PolA_pol_head_dom"/>
</dbReference>
<dbReference type="InterPro" id="IPR032828">
    <property type="entry name" value="PolyA_RNA-bd"/>
</dbReference>
<dbReference type="InterPro" id="IPR050124">
    <property type="entry name" value="tRNA_CCA-adding_enzyme"/>
</dbReference>
<dbReference type="NCBIfam" id="NF008137">
    <property type="entry name" value="PRK10885.1"/>
    <property type="match status" value="1"/>
</dbReference>
<dbReference type="PANTHER" id="PTHR47545">
    <property type="entry name" value="MULTIFUNCTIONAL CCA PROTEIN"/>
    <property type="match status" value="1"/>
</dbReference>
<dbReference type="PANTHER" id="PTHR47545:SF1">
    <property type="entry name" value="MULTIFUNCTIONAL CCA PROTEIN"/>
    <property type="match status" value="1"/>
</dbReference>
<dbReference type="Pfam" id="PF01966">
    <property type="entry name" value="HD"/>
    <property type="match status" value="1"/>
</dbReference>
<dbReference type="Pfam" id="PF01743">
    <property type="entry name" value="PolyA_pol"/>
    <property type="match status" value="1"/>
</dbReference>
<dbReference type="Pfam" id="PF12627">
    <property type="entry name" value="PolyA_pol_RNAbd"/>
    <property type="match status" value="1"/>
</dbReference>
<dbReference type="PIRSF" id="PIRSF000813">
    <property type="entry name" value="CCA_bact"/>
    <property type="match status" value="1"/>
</dbReference>
<dbReference type="SUPFAM" id="SSF81301">
    <property type="entry name" value="Nucleotidyltransferase"/>
    <property type="match status" value="1"/>
</dbReference>
<dbReference type="SUPFAM" id="SSF81891">
    <property type="entry name" value="Poly A polymerase C-terminal region-like"/>
    <property type="match status" value="1"/>
</dbReference>
<dbReference type="PROSITE" id="PS51831">
    <property type="entry name" value="HD"/>
    <property type="match status" value="1"/>
</dbReference>
<accession>B8CJF9</accession>
<keyword id="KW-0067">ATP-binding</keyword>
<keyword id="KW-0378">Hydrolase</keyword>
<keyword id="KW-0460">Magnesium</keyword>
<keyword id="KW-0479">Metal-binding</keyword>
<keyword id="KW-0511">Multifunctional enzyme</keyword>
<keyword id="KW-0533">Nickel</keyword>
<keyword id="KW-0547">Nucleotide-binding</keyword>
<keyword id="KW-0548">Nucleotidyltransferase</keyword>
<keyword id="KW-0692">RNA repair</keyword>
<keyword id="KW-0694">RNA-binding</keyword>
<keyword id="KW-0808">Transferase</keyword>
<keyword id="KW-0819">tRNA processing</keyword>
<evidence type="ECO:0000255" key="1">
    <source>
        <dbReference type="HAMAP-Rule" id="MF_01261"/>
    </source>
</evidence>
<comment type="function">
    <text evidence="1">Catalyzes the addition and repair of the essential 3'-terminal CCA sequence in tRNAs without using a nucleic acid template. Adds these three nucleotides in the order of C, C, and A to the tRNA nucleotide-73, using CTP and ATP as substrates and producing inorganic pyrophosphate. tRNA 3'-terminal CCA addition is required both for tRNA processing and repair. Also involved in tRNA surveillance by mediating tandem CCA addition to generate a CCACCA at the 3' terminus of unstable tRNAs. While stable tRNAs receive only 3'-terminal CCA, unstable tRNAs are marked with CCACCA and rapidly degraded.</text>
</comment>
<comment type="catalytic activity">
    <reaction evidence="1">
        <text>a tRNA precursor + 2 CTP + ATP = a tRNA with a 3' CCA end + 3 diphosphate</text>
        <dbReference type="Rhea" id="RHEA:14433"/>
        <dbReference type="Rhea" id="RHEA-COMP:10465"/>
        <dbReference type="Rhea" id="RHEA-COMP:10468"/>
        <dbReference type="ChEBI" id="CHEBI:30616"/>
        <dbReference type="ChEBI" id="CHEBI:33019"/>
        <dbReference type="ChEBI" id="CHEBI:37563"/>
        <dbReference type="ChEBI" id="CHEBI:74896"/>
        <dbReference type="ChEBI" id="CHEBI:83071"/>
        <dbReference type="EC" id="2.7.7.72"/>
    </reaction>
</comment>
<comment type="catalytic activity">
    <reaction evidence="1">
        <text>a tRNA with a 3' CCA end + 2 CTP + ATP = a tRNA with a 3' CCACCA end + 3 diphosphate</text>
        <dbReference type="Rhea" id="RHEA:76235"/>
        <dbReference type="Rhea" id="RHEA-COMP:10468"/>
        <dbReference type="Rhea" id="RHEA-COMP:18655"/>
        <dbReference type="ChEBI" id="CHEBI:30616"/>
        <dbReference type="ChEBI" id="CHEBI:33019"/>
        <dbReference type="ChEBI" id="CHEBI:37563"/>
        <dbReference type="ChEBI" id="CHEBI:83071"/>
        <dbReference type="ChEBI" id="CHEBI:195187"/>
    </reaction>
    <physiologicalReaction direction="left-to-right" evidence="1">
        <dbReference type="Rhea" id="RHEA:76236"/>
    </physiologicalReaction>
</comment>
<comment type="cofactor">
    <cofactor evidence="1">
        <name>Mg(2+)</name>
        <dbReference type="ChEBI" id="CHEBI:18420"/>
    </cofactor>
    <text evidence="1">Magnesium is required for nucleotidyltransferase activity.</text>
</comment>
<comment type="cofactor">
    <cofactor evidence="1">
        <name>Ni(2+)</name>
        <dbReference type="ChEBI" id="CHEBI:49786"/>
    </cofactor>
    <text evidence="1">Nickel for phosphatase activity.</text>
</comment>
<comment type="subunit">
    <text evidence="1">Monomer. Can also form homodimers and oligomers.</text>
</comment>
<comment type="domain">
    <text evidence="1">Comprises two domains: an N-terminal domain containing the nucleotidyltransferase activity and a C-terminal HD domain associated with both phosphodiesterase and phosphatase activities.</text>
</comment>
<comment type="miscellaneous">
    <text evidence="1">A single active site specifically recognizes both ATP and CTP and is responsible for their addition.</text>
</comment>
<comment type="similarity">
    <text evidence="1">Belongs to the tRNA nucleotidyltransferase/poly(A) polymerase family. Bacterial CCA-adding enzyme type 1 subfamily.</text>
</comment>
<sequence>MKIYLVGGAVRDSLLELPIKDRDYMVVGATPEQMLAQGYKQVGKDFPVFLHPKTQQEYALARTERKTAAGYGGFSVDAAPNVTLEQDLLRRDLTINAIAQDDQGNRYDPFNGIADLNARLLRHVSDAFIEDPLRVLRVARFAARFHSLGFNIAAETMALMTKISQSGELEALTAERVYIELDKSLTSDAPQVFFSVLKECGALAVLFPEIDALFGIPQPEQWHPEIDSGVHTLMVLEQAAKLSNDNAVRFASLVHDLGKALSPKASLPKHHGHGQKGLPLIKALCERFRVPNEYRDLALLVSDQHQNIHNAHELRADTIVKLFDKADFWRKPHRLEQLLLSCEADAKGRTGFELSPYPQASYIQQCFKAASNVSVKDIIDAGYKGAEIRQQLTSSRVEAVQEIKLNLE</sequence>
<proteinExistence type="inferred from homology"/>
<gene>
    <name evidence="1" type="primary">cca</name>
    <name type="ordered locus">swp_1124</name>
</gene>
<feature type="chain" id="PRO_1000140053" description="Multifunctional CCA protein">
    <location>
        <begin position="1"/>
        <end position="408"/>
    </location>
</feature>
<feature type="domain" description="HD" evidence="1">
    <location>
        <begin position="228"/>
        <end position="329"/>
    </location>
</feature>
<feature type="binding site" evidence="1">
    <location>
        <position position="8"/>
    </location>
    <ligand>
        <name>ATP</name>
        <dbReference type="ChEBI" id="CHEBI:30616"/>
    </ligand>
</feature>
<feature type="binding site" evidence="1">
    <location>
        <position position="8"/>
    </location>
    <ligand>
        <name>CTP</name>
        <dbReference type="ChEBI" id="CHEBI:37563"/>
    </ligand>
</feature>
<feature type="binding site" evidence="1">
    <location>
        <position position="11"/>
    </location>
    <ligand>
        <name>ATP</name>
        <dbReference type="ChEBI" id="CHEBI:30616"/>
    </ligand>
</feature>
<feature type="binding site" evidence="1">
    <location>
        <position position="11"/>
    </location>
    <ligand>
        <name>CTP</name>
        <dbReference type="ChEBI" id="CHEBI:37563"/>
    </ligand>
</feature>
<feature type="binding site" evidence="1">
    <location>
        <position position="21"/>
    </location>
    <ligand>
        <name>Mg(2+)</name>
        <dbReference type="ChEBI" id="CHEBI:18420"/>
    </ligand>
</feature>
<feature type="binding site" evidence="1">
    <location>
        <position position="23"/>
    </location>
    <ligand>
        <name>Mg(2+)</name>
        <dbReference type="ChEBI" id="CHEBI:18420"/>
    </ligand>
</feature>
<feature type="binding site" evidence="1">
    <location>
        <position position="91"/>
    </location>
    <ligand>
        <name>ATP</name>
        <dbReference type="ChEBI" id="CHEBI:30616"/>
    </ligand>
</feature>
<feature type="binding site" evidence="1">
    <location>
        <position position="91"/>
    </location>
    <ligand>
        <name>CTP</name>
        <dbReference type="ChEBI" id="CHEBI:37563"/>
    </ligand>
</feature>
<feature type="binding site" evidence="1">
    <location>
        <position position="137"/>
    </location>
    <ligand>
        <name>ATP</name>
        <dbReference type="ChEBI" id="CHEBI:30616"/>
    </ligand>
</feature>
<feature type="binding site" evidence="1">
    <location>
        <position position="137"/>
    </location>
    <ligand>
        <name>CTP</name>
        <dbReference type="ChEBI" id="CHEBI:37563"/>
    </ligand>
</feature>
<feature type="binding site" evidence="1">
    <location>
        <position position="140"/>
    </location>
    <ligand>
        <name>ATP</name>
        <dbReference type="ChEBI" id="CHEBI:30616"/>
    </ligand>
</feature>
<feature type="binding site" evidence="1">
    <location>
        <position position="140"/>
    </location>
    <ligand>
        <name>CTP</name>
        <dbReference type="ChEBI" id="CHEBI:37563"/>
    </ligand>
</feature>